<gene>
    <name evidence="1" type="primary">purT</name>
    <name type="ordered locus">ESA_01392</name>
</gene>
<keyword id="KW-0067">ATP-binding</keyword>
<keyword id="KW-0436">Ligase</keyword>
<keyword id="KW-0460">Magnesium</keyword>
<keyword id="KW-0479">Metal-binding</keyword>
<keyword id="KW-0547">Nucleotide-binding</keyword>
<keyword id="KW-0658">Purine biosynthesis</keyword>
<keyword id="KW-1185">Reference proteome</keyword>
<protein>
    <recommendedName>
        <fullName evidence="1">Formate-dependent phosphoribosylglycinamide formyltransferase</fullName>
        <ecNumber evidence="1">6.3.1.21</ecNumber>
    </recommendedName>
    <alternativeName>
        <fullName evidence="1">5'-phosphoribosylglycinamide transformylase 2</fullName>
    </alternativeName>
    <alternativeName>
        <fullName evidence="1">Formate-dependent GAR transformylase</fullName>
    </alternativeName>
    <alternativeName>
        <fullName evidence="1">GAR transformylase 2</fullName>
        <shortName evidence="1">GART 2</shortName>
    </alternativeName>
    <alternativeName>
        <fullName evidence="1">Non-folate glycinamide ribonucleotide transformylase</fullName>
    </alternativeName>
    <alternativeName>
        <fullName evidence="1">Phosphoribosylglycinamide formyltransferase 2</fullName>
    </alternativeName>
</protein>
<comment type="function">
    <text evidence="1">Involved in the de novo purine biosynthesis. Catalyzes the transfer of formate to 5-phospho-ribosyl-glycinamide (GAR), producing 5-phospho-ribosyl-N-formylglycinamide (FGAR). Formate is provided by PurU via hydrolysis of 10-formyl-tetrahydrofolate.</text>
</comment>
<comment type="catalytic activity">
    <reaction evidence="1">
        <text>N(1)-(5-phospho-beta-D-ribosyl)glycinamide + formate + ATP = N(2)-formyl-N(1)-(5-phospho-beta-D-ribosyl)glycinamide + ADP + phosphate + H(+)</text>
        <dbReference type="Rhea" id="RHEA:24829"/>
        <dbReference type="ChEBI" id="CHEBI:15378"/>
        <dbReference type="ChEBI" id="CHEBI:15740"/>
        <dbReference type="ChEBI" id="CHEBI:30616"/>
        <dbReference type="ChEBI" id="CHEBI:43474"/>
        <dbReference type="ChEBI" id="CHEBI:143788"/>
        <dbReference type="ChEBI" id="CHEBI:147286"/>
        <dbReference type="ChEBI" id="CHEBI:456216"/>
        <dbReference type="EC" id="6.3.1.21"/>
    </reaction>
    <physiologicalReaction direction="left-to-right" evidence="1">
        <dbReference type="Rhea" id="RHEA:24830"/>
    </physiologicalReaction>
</comment>
<comment type="pathway">
    <text evidence="1">Purine metabolism; IMP biosynthesis via de novo pathway; N(2)-formyl-N(1)-(5-phospho-D-ribosyl)glycinamide from N(1)-(5-phospho-D-ribosyl)glycinamide (formate route): step 1/1.</text>
</comment>
<comment type="subunit">
    <text evidence="1">Homodimer.</text>
</comment>
<comment type="similarity">
    <text evidence="1">Belongs to the PurK/PurT family.</text>
</comment>
<sequence>MAMLGTALRPSATRVMLLGSGELGKEVAIECQRLGIEVIAVDRYADAPAMQVAHRSHVINMLDGAALKKLVAQEMPDFIVPEIEAIATDALVELEQQGQRVVPTARAARLTMNREGIRRLAAEELGLPTSAYRFAENEAEFREAVAEIGLPCIVKPVMSSSGKGQSFIRSEEMLESAWQYAQQGGRAGAGKVIVEGVVKFDFEITLLTISAVDGVHFCAPIGHRQEDGDYRESWQPQQMSDVALTRAQEIAQKVVEALGGYGLFGVELFVCGDEVIFSEVSPRPHDTGMVTLISQDLSEFALHVRAFLGLPVGGIRQYGPAASAVILPTLKSDDVKFGELSGALGAGLQLRLFGKPEIDGSRRLGVALATGETVDDAIARAKASAAAVIVKG</sequence>
<feature type="chain" id="PRO_0000319159" description="Formate-dependent phosphoribosylglycinamide formyltransferase">
    <location>
        <begin position="1"/>
        <end position="392"/>
    </location>
</feature>
<feature type="domain" description="ATP-grasp" evidence="1">
    <location>
        <begin position="119"/>
        <end position="308"/>
    </location>
</feature>
<feature type="binding site" evidence="1">
    <location>
        <begin position="22"/>
        <end position="23"/>
    </location>
    <ligand>
        <name>N(1)-(5-phospho-beta-D-ribosyl)glycinamide</name>
        <dbReference type="ChEBI" id="CHEBI:143788"/>
    </ligand>
</feature>
<feature type="binding site" evidence="1">
    <location>
        <position position="82"/>
    </location>
    <ligand>
        <name>N(1)-(5-phospho-beta-D-ribosyl)glycinamide</name>
        <dbReference type="ChEBI" id="CHEBI:143788"/>
    </ligand>
</feature>
<feature type="binding site" evidence="1">
    <location>
        <position position="114"/>
    </location>
    <ligand>
        <name>ATP</name>
        <dbReference type="ChEBI" id="CHEBI:30616"/>
    </ligand>
</feature>
<feature type="binding site" evidence="1">
    <location>
        <position position="155"/>
    </location>
    <ligand>
        <name>ATP</name>
        <dbReference type="ChEBI" id="CHEBI:30616"/>
    </ligand>
</feature>
<feature type="binding site" evidence="1">
    <location>
        <begin position="160"/>
        <end position="165"/>
    </location>
    <ligand>
        <name>ATP</name>
        <dbReference type="ChEBI" id="CHEBI:30616"/>
    </ligand>
</feature>
<feature type="binding site" evidence="1">
    <location>
        <begin position="195"/>
        <end position="198"/>
    </location>
    <ligand>
        <name>ATP</name>
        <dbReference type="ChEBI" id="CHEBI:30616"/>
    </ligand>
</feature>
<feature type="binding site" evidence="1">
    <location>
        <position position="203"/>
    </location>
    <ligand>
        <name>ATP</name>
        <dbReference type="ChEBI" id="CHEBI:30616"/>
    </ligand>
</feature>
<feature type="binding site" evidence="1">
    <location>
        <position position="267"/>
    </location>
    <ligand>
        <name>Mg(2+)</name>
        <dbReference type="ChEBI" id="CHEBI:18420"/>
    </ligand>
</feature>
<feature type="binding site" evidence="1">
    <location>
        <position position="279"/>
    </location>
    <ligand>
        <name>Mg(2+)</name>
        <dbReference type="ChEBI" id="CHEBI:18420"/>
    </ligand>
</feature>
<feature type="binding site" evidence="1">
    <location>
        <position position="286"/>
    </location>
    <ligand>
        <name>N(1)-(5-phospho-beta-D-ribosyl)glycinamide</name>
        <dbReference type="ChEBI" id="CHEBI:143788"/>
    </ligand>
</feature>
<feature type="binding site" evidence="1">
    <location>
        <position position="355"/>
    </location>
    <ligand>
        <name>N(1)-(5-phospho-beta-D-ribosyl)glycinamide</name>
        <dbReference type="ChEBI" id="CHEBI:143788"/>
    </ligand>
</feature>
<feature type="binding site" evidence="1">
    <location>
        <begin position="362"/>
        <end position="363"/>
    </location>
    <ligand>
        <name>N(1)-(5-phospho-beta-D-ribosyl)glycinamide</name>
        <dbReference type="ChEBI" id="CHEBI:143788"/>
    </ligand>
</feature>
<reference key="1">
    <citation type="journal article" date="2010" name="PLoS ONE">
        <title>Genome sequence of Cronobacter sakazakii BAA-894 and comparative genomic hybridization analysis with other Cronobacter species.</title>
        <authorList>
            <person name="Kucerova E."/>
            <person name="Clifton S.W."/>
            <person name="Xia X.Q."/>
            <person name="Long F."/>
            <person name="Porwollik S."/>
            <person name="Fulton L."/>
            <person name="Fronick C."/>
            <person name="Minx P."/>
            <person name="Kyung K."/>
            <person name="Warren W."/>
            <person name="Fulton R."/>
            <person name="Feng D."/>
            <person name="Wollam A."/>
            <person name="Shah N."/>
            <person name="Bhonagiri V."/>
            <person name="Nash W.E."/>
            <person name="Hallsworth-Pepin K."/>
            <person name="Wilson R.K."/>
            <person name="McClelland M."/>
            <person name="Forsythe S.J."/>
        </authorList>
    </citation>
    <scope>NUCLEOTIDE SEQUENCE [LARGE SCALE GENOMIC DNA]</scope>
    <source>
        <strain>ATCC BAA-894</strain>
    </source>
</reference>
<organism>
    <name type="scientific">Cronobacter sakazakii (strain ATCC BAA-894)</name>
    <name type="common">Enterobacter sakazakii</name>
    <dbReference type="NCBI Taxonomy" id="290339"/>
    <lineage>
        <taxon>Bacteria</taxon>
        <taxon>Pseudomonadati</taxon>
        <taxon>Pseudomonadota</taxon>
        <taxon>Gammaproteobacteria</taxon>
        <taxon>Enterobacterales</taxon>
        <taxon>Enterobacteriaceae</taxon>
        <taxon>Cronobacter</taxon>
    </lineage>
</organism>
<proteinExistence type="inferred from homology"/>
<evidence type="ECO:0000255" key="1">
    <source>
        <dbReference type="HAMAP-Rule" id="MF_01643"/>
    </source>
</evidence>
<accession>A7MEA0</accession>
<name>PURT_CROS8</name>
<dbReference type="EC" id="6.3.1.21" evidence="1"/>
<dbReference type="EMBL" id="CP000783">
    <property type="protein sequence ID" value="ABU76652.1"/>
    <property type="molecule type" value="Genomic_DNA"/>
</dbReference>
<dbReference type="RefSeq" id="WP_041460474.1">
    <property type="nucleotide sequence ID" value="NC_009778.1"/>
</dbReference>
<dbReference type="SMR" id="A7MEA0"/>
<dbReference type="KEGG" id="esa:ESA_01392"/>
<dbReference type="PATRIC" id="fig|290339.8.peg.1236"/>
<dbReference type="HOGENOM" id="CLU_011534_1_3_6"/>
<dbReference type="UniPathway" id="UPA00074">
    <property type="reaction ID" value="UER00127"/>
</dbReference>
<dbReference type="Proteomes" id="UP000000260">
    <property type="component" value="Chromosome"/>
</dbReference>
<dbReference type="GO" id="GO:0005829">
    <property type="term" value="C:cytosol"/>
    <property type="evidence" value="ECO:0007669"/>
    <property type="project" value="TreeGrafter"/>
</dbReference>
<dbReference type="GO" id="GO:0005524">
    <property type="term" value="F:ATP binding"/>
    <property type="evidence" value="ECO:0007669"/>
    <property type="project" value="UniProtKB-UniRule"/>
</dbReference>
<dbReference type="GO" id="GO:0000287">
    <property type="term" value="F:magnesium ion binding"/>
    <property type="evidence" value="ECO:0007669"/>
    <property type="project" value="InterPro"/>
</dbReference>
<dbReference type="GO" id="GO:0043815">
    <property type="term" value="F:phosphoribosylglycinamide formyltransferase 2 activity"/>
    <property type="evidence" value="ECO:0007669"/>
    <property type="project" value="UniProtKB-UniRule"/>
</dbReference>
<dbReference type="GO" id="GO:0004644">
    <property type="term" value="F:phosphoribosylglycinamide formyltransferase activity"/>
    <property type="evidence" value="ECO:0007669"/>
    <property type="project" value="InterPro"/>
</dbReference>
<dbReference type="GO" id="GO:0006189">
    <property type="term" value="P:'de novo' IMP biosynthetic process"/>
    <property type="evidence" value="ECO:0007669"/>
    <property type="project" value="UniProtKB-UniRule"/>
</dbReference>
<dbReference type="FunFam" id="3.30.1490.20:FF:000013">
    <property type="entry name" value="Formate-dependent phosphoribosylglycinamide formyltransferase"/>
    <property type="match status" value="1"/>
</dbReference>
<dbReference type="FunFam" id="3.30.470.20:FF:000027">
    <property type="entry name" value="Formate-dependent phosphoribosylglycinamide formyltransferase"/>
    <property type="match status" value="1"/>
</dbReference>
<dbReference type="FunFam" id="3.40.50.20:FF:000007">
    <property type="entry name" value="Formate-dependent phosphoribosylglycinamide formyltransferase"/>
    <property type="match status" value="1"/>
</dbReference>
<dbReference type="Gene3D" id="3.40.50.20">
    <property type="match status" value="1"/>
</dbReference>
<dbReference type="Gene3D" id="3.30.1490.20">
    <property type="entry name" value="ATP-grasp fold, A domain"/>
    <property type="match status" value="1"/>
</dbReference>
<dbReference type="Gene3D" id="3.30.470.20">
    <property type="entry name" value="ATP-grasp fold, B domain"/>
    <property type="match status" value="1"/>
</dbReference>
<dbReference type="HAMAP" id="MF_01643">
    <property type="entry name" value="PurT"/>
    <property type="match status" value="1"/>
</dbReference>
<dbReference type="InterPro" id="IPR011761">
    <property type="entry name" value="ATP-grasp"/>
</dbReference>
<dbReference type="InterPro" id="IPR003135">
    <property type="entry name" value="ATP-grasp_carboxylate-amine"/>
</dbReference>
<dbReference type="InterPro" id="IPR013815">
    <property type="entry name" value="ATP_grasp_subdomain_1"/>
</dbReference>
<dbReference type="InterPro" id="IPR016185">
    <property type="entry name" value="PreATP-grasp_dom_sf"/>
</dbReference>
<dbReference type="InterPro" id="IPR005862">
    <property type="entry name" value="PurT"/>
</dbReference>
<dbReference type="InterPro" id="IPR054350">
    <property type="entry name" value="PurT/PurK_preATP-grasp"/>
</dbReference>
<dbReference type="InterPro" id="IPR048740">
    <property type="entry name" value="PurT_C"/>
</dbReference>
<dbReference type="InterPro" id="IPR011054">
    <property type="entry name" value="Rudment_hybrid_motif"/>
</dbReference>
<dbReference type="NCBIfam" id="NF006766">
    <property type="entry name" value="PRK09288.1"/>
    <property type="match status" value="1"/>
</dbReference>
<dbReference type="NCBIfam" id="TIGR01142">
    <property type="entry name" value="purT"/>
    <property type="match status" value="1"/>
</dbReference>
<dbReference type="PANTHER" id="PTHR43055">
    <property type="entry name" value="FORMATE-DEPENDENT PHOSPHORIBOSYLGLYCINAMIDE FORMYLTRANSFERASE"/>
    <property type="match status" value="1"/>
</dbReference>
<dbReference type="PANTHER" id="PTHR43055:SF1">
    <property type="entry name" value="FORMATE-DEPENDENT PHOSPHORIBOSYLGLYCINAMIDE FORMYLTRANSFERASE"/>
    <property type="match status" value="1"/>
</dbReference>
<dbReference type="Pfam" id="PF02222">
    <property type="entry name" value="ATP-grasp"/>
    <property type="match status" value="1"/>
</dbReference>
<dbReference type="Pfam" id="PF21244">
    <property type="entry name" value="PurT_C"/>
    <property type="match status" value="1"/>
</dbReference>
<dbReference type="Pfam" id="PF22660">
    <property type="entry name" value="RS_preATP-grasp-like"/>
    <property type="match status" value="1"/>
</dbReference>
<dbReference type="SUPFAM" id="SSF56059">
    <property type="entry name" value="Glutathione synthetase ATP-binding domain-like"/>
    <property type="match status" value="1"/>
</dbReference>
<dbReference type="SUPFAM" id="SSF52440">
    <property type="entry name" value="PreATP-grasp domain"/>
    <property type="match status" value="1"/>
</dbReference>
<dbReference type="SUPFAM" id="SSF51246">
    <property type="entry name" value="Rudiment single hybrid motif"/>
    <property type="match status" value="1"/>
</dbReference>
<dbReference type="PROSITE" id="PS50975">
    <property type="entry name" value="ATP_GRASP"/>
    <property type="match status" value="1"/>
</dbReference>